<name>RL24_PARD8</name>
<feature type="chain" id="PRO_1000052271" description="Large ribosomal subunit protein uL24">
    <location>
        <begin position="1"/>
        <end position="106"/>
    </location>
</feature>
<sequence>MSKLHIKKGDIVFVNAGEDKGKTGRVLQVLVKDNRAIVEGINVVSKHTKPNAKNPQGGIEKKEAPIHLSNLNVVDPKSGKATRIGRKLNEKGALVRYSKKSGEEIK</sequence>
<organism>
    <name type="scientific">Parabacteroides distasonis (strain ATCC 8503 / DSM 20701 / CIP 104284 / JCM 5825 / NCTC 11152)</name>
    <dbReference type="NCBI Taxonomy" id="435591"/>
    <lineage>
        <taxon>Bacteria</taxon>
        <taxon>Pseudomonadati</taxon>
        <taxon>Bacteroidota</taxon>
        <taxon>Bacteroidia</taxon>
        <taxon>Bacteroidales</taxon>
        <taxon>Tannerellaceae</taxon>
        <taxon>Parabacteroides</taxon>
    </lineage>
</organism>
<reference key="1">
    <citation type="journal article" date="2007" name="PLoS Biol.">
        <title>Evolution of symbiotic bacteria in the distal human intestine.</title>
        <authorList>
            <person name="Xu J."/>
            <person name="Mahowald M.A."/>
            <person name="Ley R.E."/>
            <person name="Lozupone C.A."/>
            <person name="Hamady M."/>
            <person name="Martens E.C."/>
            <person name="Henrissat B."/>
            <person name="Coutinho P.M."/>
            <person name="Minx P."/>
            <person name="Latreille P."/>
            <person name="Cordum H."/>
            <person name="Van Brunt A."/>
            <person name="Kim K."/>
            <person name="Fulton R.S."/>
            <person name="Fulton L.A."/>
            <person name="Clifton S.W."/>
            <person name="Wilson R.K."/>
            <person name="Knight R.D."/>
            <person name="Gordon J.I."/>
        </authorList>
    </citation>
    <scope>NUCLEOTIDE SEQUENCE [LARGE SCALE GENOMIC DNA]</scope>
    <source>
        <strain>ATCC 8503 / DSM 20701 / CIP 104284 / JCM 5825 / NCTC 11152</strain>
    </source>
</reference>
<accession>A6LEI0</accession>
<evidence type="ECO:0000255" key="1">
    <source>
        <dbReference type="HAMAP-Rule" id="MF_01326"/>
    </source>
</evidence>
<evidence type="ECO:0000305" key="2"/>
<dbReference type="EMBL" id="CP000140">
    <property type="protein sequence ID" value="ABR44094.1"/>
    <property type="molecule type" value="Genomic_DNA"/>
</dbReference>
<dbReference type="RefSeq" id="WP_005853984.1">
    <property type="nucleotide sequence ID" value="NZ_LR215978.1"/>
</dbReference>
<dbReference type="SMR" id="A6LEI0"/>
<dbReference type="STRING" id="435591.BDI_2369"/>
<dbReference type="PaxDb" id="435591-BDI_2369"/>
<dbReference type="GeneID" id="93522362"/>
<dbReference type="KEGG" id="pdi:BDI_2369"/>
<dbReference type="eggNOG" id="COG0198">
    <property type="taxonomic scope" value="Bacteria"/>
</dbReference>
<dbReference type="HOGENOM" id="CLU_093315_2_0_10"/>
<dbReference type="BioCyc" id="PDIS435591:G1G5A-2434-MONOMER"/>
<dbReference type="Proteomes" id="UP000000566">
    <property type="component" value="Chromosome"/>
</dbReference>
<dbReference type="GO" id="GO:1990904">
    <property type="term" value="C:ribonucleoprotein complex"/>
    <property type="evidence" value="ECO:0007669"/>
    <property type="project" value="UniProtKB-KW"/>
</dbReference>
<dbReference type="GO" id="GO:0005840">
    <property type="term" value="C:ribosome"/>
    <property type="evidence" value="ECO:0007669"/>
    <property type="project" value="UniProtKB-KW"/>
</dbReference>
<dbReference type="GO" id="GO:0019843">
    <property type="term" value="F:rRNA binding"/>
    <property type="evidence" value="ECO:0007669"/>
    <property type="project" value="UniProtKB-UniRule"/>
</dbReference>
<dbReference type="GO" id="GO:0003735">
    <property type="term" value="F:structural constituent of ribosome"/>
    <property type="evidence" value="ECO:0007669"/>
    <property type="project" value="InterPro"/>
</dbReference>
<dbReference type="GO" id="GO:0006412">
    <property type="term" value="P:translation"/>
    <property type="evidence" value="ECO:0007669"/>
    <property type="project" value="UniProtKB-UniRule"/>
</dbReference>
<dbReference type="CDD" id="cd06089">
    <property type="entry name" value="KOW_RPL26"/>
    <property type="match status" value="1"/>
</dbReference>
<dbReference type="FunFam" id="2.30.30.30:FF:000004">
    <property type="entry name" value="50S ribosomal protein L24"/>
    <property type="match status" value="1"/>
</dbReference>
<dbReference type="Gene3D" id="2.30.30.30">
    <property type="match status" value="1"/>
</dbReference>
<dbReference type="HAMAP" id="MF_01326_B">
    <property type="entry name" value="Ribosomal_uL24_B"/>
    <property type="match status" value="1"/>
</dbReference>
<dbReference type="InterPro" id="IPR005824">
    <property type="entry name" value="KOW"/>
</dbReference>
<dbReference type="InterPro" id="IPR014722">
    <property type="entry name" value="Rib_uL2_dom2"/>
</dbReference>
<dbReference type="InterPro" id="IPR003256">
    <property type="entry name" value="Ribosomal_uL24"/>
</dbReference>
<dbReference type="InterPro" id="IPR041988">
    <property type="entry name" value="Ribosomal_uL24_KOW"/>
</dbReference>
<dbReference type="InterPro" id="IPR008991">
    <property type="entry name" value="Translation_prot_SH3-like_sf"/>
</dbReference>
<dbReference type="NCBIfam" id="TIGR01079">
    <property type="entry name" value="rplX_bact"/>
    <property type="match status" value="1"/>
</dbReference>
<dbReference type="PANTHER" id="PTHR12903">
    <property type="entry name" value="MITOCHONDRIAL RIBOSOMAL PROTEIN L24"/>
    <property type="match status" value="1"/>
</dbReference>
<dbReference type="Pfam" id="PF00467">
    <property type="entry name" value="KOW"/>
    <property type="match status" value="1"/>
</dbReference>
<dbReference type="Pfam" id="PF17136">
    <property type="entry name" value="ribosomal_L24"/>
    <property type="match status" value="1"/>
</dbReference>
<dbReference type="SMART" id="SM00739">
    <property type="entry name" value="KOW"/>
    <property type="match status" value="1"/>
</dbReference>
<dbReference type="SUPFAM" id="SSF50104">
    <property type="entry name" value="Translation proteins SH3-like domain"/>
    <property type="match status" value="1"/>
</dbReference>
<protein>
    <recommendedName>
        <fullName evidence="1">Large ribosomal subunit protein uL24</fullName>
    </recommendedName>
    <alternativeName>
        <fullName evidence="2">50S ribosomal protein L24</fullName>
    </alternativeName>
</protein>
<proteinExistence type="inferred from homology"/>
<comment type="function">
    <text evidence="1">One of two assembly initiator proteins, it binds directly to the 5'-end of the 23S rRNA, where it nucleates assembly of the 50S subunit.</text>
</comment>
<comment type="function">
    <text evidence="1">One of the proteins that surrounds the polypeptide exit tunnel on the outside of the subunit.</text>
</comment>
<comment type="subunit">
    <text evidence="1">Part of the 50S ribosomal subunit.</text>
</comment>
<comment type="similarity">
    <text evidence="1">Belongs to the universal ribosomal protein uL24 family.</text>
</comment>
<keyword id="KW-1185">Reference proteome</keyword>
<keyword id="KW-0687">Ribonucleoprotein</keyword>
<keyword id="KW-0689">Ribosomal protein</keyword>
<keyword id="KW-0694">RNA-binding</keyword>
<keyword id="KW-0699">rRNA-binding</keyword>
<gene>
    <name evidence="1" type="primary">rplX</name>
    <name type="ordered locus">BDI_2369</name>
</gene>